<dbReference type="EC" id="3.4.21.53" evidence="1"/>
<dbReference type="EMBL" id="AAHF01000003">
    <property type="protein sequence ID" value="EAL91437.1"/>
    <property type="molecule type" value="Genomic_DNA"/>
</dbReference>
<dbReference type="RefSeq" id="XP_753475.1">
    <property type="nucleotide sequence ID" value="XM_748382.1"/>
</dbReference>
<dbReference type="SMR" id="Q4WVD9"/>
<dbReference type="STRING" id="330879.Q4WVD9"/>
<dbReference type="EnsemblFungi" id="EAL91437">
    <property type="protein sequence ID" value="EAL91437"/>
    <property type="gene ID" value="AFUA_5G11750"/>
</dbReference>
<dbReference type="GeneID" id="3511518"/>
<dbReference type="KEGG" id="afm:AFUA_5G11750"/>
<dbReference type="VEuPathDB" id="FungiDB:Afu5g11750"/>
<dbReference type="eggNOG" id="KOG2004">
    <property type="taxonomic scope" value="Eukaryota"/>
</dbReference>
<dbReference type="HOGENOM" id="CLU_004109_4_0_1"/>
<dbReference type="InParanoid" id="Q4WVD9"/>
<dbReference type="OMA" id="MPMNQEY"/>
<dbReference type="OrthoDB" id="2411602at2759"/>
<dbReference type="Proteomes" id="UP000002530">
    <property type="component" value="Chromosome 5"/>
</dbReference>
<dbReference type="GO" id="GO:0005782">
    <property type="term" value="C:peroxisomal matrix"/>
    <property type="evidence" value="ECO:0000318"/>
    <property type="project" value="GO_Central"/>
</dbReference>
<dbReference type="GO" id="GO:0005524">
    <property type="term" value="F:ATP binding"/>
    <property type="evidence" value="ECO:0007669"/>
    <property type="project" value="UniProtKB-UniRule"/>
</dbReference>
<dbReference type="GO" id="GO:0016887">
    <property type="term" value="F:ATP hydrolysis activity"/>
    <property type="evidence" value="ECO:0007669"/>
    <property type="project" value="UniProtKB-UniRule"/>
</dbReference>
<dbReference type="GO" id="GO:0004176">
    <property type="term" value="F:ATP-dependent peptidase activity"/>
    <property type="evidence" value="ECO:0007669"/>
    <property type="project" value="UniProtKB-UniRule"/>
</dbReference>
<dbReference type="GO" id="GO:0004252">
    <property type="term" value="F:serine-type endopeptidase activity"/>
    <property type="evidence" value="ECO:0007669"/>
    <property type="project" value="UniProtKB-UniRule"/>
</dbReference>
<dbReference type="GO" id="GO:0016558">
    <property type="term" value="P:protein import into peroxisome matrix"/>
    <property type="evidence" value="ECO:0007669"/>
    <property type="project" value="UniProtKB-UniRule"/>
</dbReference>
<dbReference type="GO" id="GO:0016485">
    <property type="term" value="P:protein processing"/>
    <property type="evidence" value="ECO:0000318"/>
    <property type="project" value="GO_Central"/>
</dbReference>
<dbReference type="GO" id="GO:0006515">
    <property type="term" value="P:protein quality control for misfolded or incompletely synthesized proteins"/>
    <property type="evidence" value="ECO:0007669"/>
    <property type="project" value="UniProtKB-UniRule"/>
</dbReference>
<dbReference type="GO" id="GO:0006625">
    <property type="term" value="P:protein targeting to peroxisome"/>
    <property type="evidence" value="ECO:0000318"/>
    <property type="project" value="GO_Central"/>
</dbReference>
<dbReference type="CDD" id="cd19500">
    <property type="entry name" value="RecA-like_Lon"/>
    <property type="match status" value="1"/>
</dbReference>
<dbReference type="FunFam" id="1.20.5.5270:FF:000002">
    <property type="entry name" value="Lon protease homolog"/>
    <property type="match status" value="1"/>
</dbReference>
<dbReference type="FunFam" id="1.10.8.60:FF:000091">
    <property type="entry name" value="Lon protease homolog 2, peroxisomal"/>
    <property type="match status" value="1"/>
</dbReference>
<dbReference type="FunFam" id="1.20.58.1480:FF:000011">
    <property type="entry name" value="Lon protease homolog 2, peroxisomal"/>
    <property type="match status" value="1"/>
</dbReference>
<dbReference type="FunFam" id="2.30.130.40:FF:000011">
    <property type="entry name" value="Lon protease homolog 2, peroxisomal"/>
    <property type="match status" value="1"/>
</dbReference>
<dbReference type="FunFam" id="3.30.230.10:FF:000039">
    <property type="entry name" value="Lon protease homolog 2, peroxisomal"/>
    <property type="match status" value="1"/>
</dbReference>
<dbReference type="Gene3D" id="1.10.8.60">
    <property type="match status" value="1"/>
</dbReference>
<dbReference type="Gene3D" id="1.20.5.5270">
    <property type="match status" value="1"/>
</dbReference>
<dbReference type="Gene3D" id="1.20.58.1480">
    <property type="match status" value="1"/>
</dbReference>
<dbReference type="Gene3D" id="3.30.230.10">
    <property type="match status" value="1"/>
</dbReference>
<dbReference type="Gene3D" id="2.30.130.40">
    <property type="entry name" value="LON domain-like"/>
    <property type="match status" value="1"/>
</dbReference>
<dbReference type="Gene3D" id="3.40.50.300">
    <property type="entry name" value="P-loop containing nucleotide triphosphate hydrolases"/>
    <property type="match status" value="1"/>
</dbReference>
<dbReference type="HAMAP" id="MF_03121">
    <property type="entry name" value="lonp2_euk"/>
    <property type="match status" value="1"/>
</dbReference>
<dbReference type="InterPro" id="IPR003593">
    <property type="entry name" value="AAA+_ATPase"/>
</dbReference>
<dbReference type="InterPro" id="IPR003959">
    <property type="entry name" value="ATPase_AAA_core"/>
</dbReference>
<dbReference type="InterPro" id="IPR004815">
    <property type="entry name" value="Lon_bac/euk-typ"/>
</dbReference>
<dbReference type="InterPro" id="IPR054594">
    <property type="entry name" value="Lon_lid"/>
</dbReference>
<dbReference type="InterPro" id="IPR008269">
    <property type="entry name" value="Lon_proteolytic"/>
</dbReference>
<dbReference type="InterPro" id="IPR027065">
    <property type="entry name" value="Lon_Prtase"/>
</dbReference>
<dbReference type="InterPro" id="IPR003111">
    <property type="entry name" value="Lon_prtase_N"/>
</dbReference>
<dbReference type="InterPro" id="IPR046336">
    <property type="entry name" value="Lon_prtase_N_sf"/>
</dbReference>
<dbReference type="InterPro" id="IPR027501">
    <property type="entry name" value="Lonp2_euk"/>
</dbReference>
<dbReference type="InterPro" id="IPR027417">
    <property type="entry name" value="P-loop_NTPase"/>
</dbReference>
<dbReference type="InterPro" id="IPR015947">
    <property type="entry name" value="PUA-like_sf"/>
</dbReference>
<dbReference type="InterPro" id="IPR020568">
    <property type="entry name" value="Ribosomal_Su5_D2-typ_SF"/>
</dbReference>
<dbReference type="InterPro" id="IPR014721">
    <property type="entry name" value="Ribsml_uS5_D2-typ_fold_subgr"/>
</dbReference>
<dbReference type="PANTHER" id="PTHR10046">
    <property type="entry name" value="ATP DEPENDENT LON PROTEASE FAMILY MEMBER"/>
    <property type="match status" value="1"/>
</dbReference>
<dbReference type="Pfam" id="PF00004">
    <property type="entry name" value="AAA"/>
    <property type="match status" value="1"/>
</dbReference>
<dbReference type="Pfam" id="PF05362">
    <property type="entry name" value="Lon_C"/>
    <property type="match status" value="1"/>
</dbReference>
<dbReference type="Pfam" id="PF22667">
    <property type="entry name" value="Lon_lid"/>
    <property type="match status" value="1"/>
</dbReference>
<dbReference type="Pfam" id="PF02190">
    <property type="entry name" value="LON_substr_bdg"/>
    <property type="match status" value="1"/>
</dbReference>
<dbReference type="PIRSF" id="PIRSF001174">
    <property type="entry name" value="Lon_proteas"/>
    <property type="match status" value="1"/>
</dbReference>
<dbReference type="PRINTS" id="PR00830">
    <property type="entry name" value="ENDOLAPTASE"/>
</dbReference>
<dbReference type="SMART" id="SM00382">
    <property type="entry name" value="AAA"/>
    <property type="match status" value="1"/>
</dbReference>
<dbReference type="SMART" id="SM00464">
    <property type="entry name" value="LON"/>
    <property type="match status" value="1"/>
</dbReference>
<dbReference type="SUPFAM" id="SSF52540">
    <property type="entry name" value="P-loop containing nucleoside triphosphate hydrolases"/>
    <property type="match status" value="1"/>
</dbReference>
<dbReference type="SUPFAM" id="SSF88697">
    <property type="entry name" value="PUA domain-like"/>
    <property type="match status" value="1"/>
</dbReference>
<dbReference type="SUPFAM" id="SSF54211">
    <property type="entry name" value="Ribosomal protein S5 domain 2-like"/>
    <property type="match status" value="1"/>
</dbReference>
<dbReference type="PROSITE" id="PS51787">
    <property type="entry name" value="LON_N"/>
    <property type="match status" value="1"/>
</dbReference>
<dbReference type="PROSITE" id="PS51786">
    <property type="entry name" value="LON_PROTEOLYTIC"/>
    <property type="match status" value="1"/>
</dbReference>
<sequence length="932" mass="102474">MGSNNGRAMKLALVPLPKGSVLLPGVTLRIPVSNRPDLANLLSALLDQTNLGKRDGNTITFGCVPLRSPLLSNDGQQLIDDGSVDGAKKEEFDAIDAGQARKEDLFRYGTVGKVIGVQRRAYAEPFLVVQGVQRFTIKHILRERPFFEGEVVLHNERDAISSDAETVELFQQLRQLSRELITLLRLSSLLPSTGTRLSPLVARKFEVYIAKTDLSQAGNLADFMADVADPTFEEKLRVLASFALRTRLERVVELLARQVQGIKNSVKVTTISTSSFPSNSPFDISQIDPRDRELLARRVMAGLTGLTPPGAAGGRNNEDEKETNEVDELQKRLQEAELSPEARKVADKELRRLRKMNPANAEYGVCRTYLENIADIPWTKVTEDKLGPETLKRARNQLDEDHYGLETIKKRLLEYLAVLRLKQSTNQDVERQIAALTKELDAANEVLAEKDVPALSESDRVSLEAKLNLLQSRRLADKSPILLLVGPPGTGKTSLARSVATSLGRKFHRISLGGVRDEAEIRGHRRTYVAAMPGLIVNGLKKVGVANPVFLLDEIDKVGGANFQGDPSAAMLEVLDPEQNSTFVDHYINIPIDLSKVLFIATANSLDTIPAPLLDRMETITLSGYTTVEKRHIAKRHLIPKQIRANGLAEGQVVLSDEVVDKVITSYTRESGVRNLERELGSICRHKAVQYADAVDNGRLDTYNPVVALGDLEDILGIERFDEEIAEKHGRPGVVTGLVAYSTGGQGSILFIEVADMPGNGRVQLTGKLGDVLKESVEVALTWVKAHSFELGLTHDPNEDIMKNRSLHVHCPAGAIPKDGPSAGLAHTIGLISLFTGKAVPPQIAMTGEVSLRGRVMPVGGIKEKLIGAHRAGVKTVLLPEQNRKDVKDVPQEVHDGLQIVYVRHIWEAIRQVWPGAHWPGQHHINFVESRL</sequence>
<comment type="function">
    <text evidence="1">ATP-dependent serine protease that mediates the selective degradation of misfolded and unassembled polypeptides in the peroxisomal matrix. Necessary for type 2 peroxisome targeting signal (PTS2)-containing protein processing and facilitates peroxisome matrix protein import.</text>
</comment>
<comment type="catalytic activity">
    <reaction evidence="1">
        <text>Hydrolysis of proteins in presence of ATP.</text>
        <dbReference type="EC" id="3.4.21.53"/>
    </reaction>
</comment>
<comment type="subcellular location">
    <subcellularLocation>
        <location evidence="1">Peroxisome matrix</location>
    </subcellularLocation>
</comment>
<comment type="similarity">
    <text evidence="1">Belongs to the peptidase S16 family.</text>
</comment>
<proteinExistence type="inferred from homology"/>
<feature type="chain" id="PRO_0000395789" description="Lon protease homolog 2, peroxisomal">
    <location>
        <begin position="1"/>
        <end position="932"/>
    </location>
</feature>
<feature type="domain" description="Lon N-terminal" evidence="3">
    <location>
        <begin position="11"/>
        <end position="259"/>
    </location>
</feature>
<feature type="domain" description="Lon proteolytic" evidence="2">
    <location>
        <begin position="729"/>
        <end position="916"/>
    </location>
</feature>
<feature type="region of interest" description="Disordered" evidence="4">
    <location>
        <begin position="304"/>
        <end position="340"/>
    </location>
</feature>
<feature type="short sequence motif" description="Microbody targeting signal" evidence="1">
    <location>
        <begin position="930"/>
        <end position="932"/>
    </location>
</feature>
<feature type="compositionally biased region" description="Basic and acidic residues" evidence="4">
    <location>
        <begin position="328"/>
        <end position="340"/>
    </location>
</feature>
<feature type="active site" evidence="1">
    <location>
        <position position="822"/>
    </location>
</feature>
<feature type="active site" evidence="1">
    <location>
        <position position="865"/>
    </location>
</feature>
<feature type="binding site" evidence="1">
    <location>
        <begin position="486"/>
        <end position="493"/>
    </location>
    <ligand>
        <name>ATP</name>
        <dbReference type="ChEBI" id="CHEBI:30616"/>
    </ligand>
</feature>
<gene>
    <name type="ORF">AFUA_5G11750</name>
</gene>
<reference key="1">
    <citation type="journal article" date="2005" name="Nature">
        <title>Genomic sequence of the pathogenic and allergenic filamentous fungus Aspergillus fumigatus.</title>
        <authorList>
            <person name="Nierman W.C."/>
            <person name="Pain A."/>
            <person name="Anderson M.J."/>
            <person name="Wortman J.R."/>
            <person name="Kim H.S."/>
            <person name="Arroyo J."/>
            <person name="Berriman M."/>
            <person name="Abe K."/>
            <person name="Archer D.B."/>
            <person name="Bermejo C."/>
            <person name="Bennett J.W."/>
            <person name="Bowyer P."/>
            <person name="Chen D."/>
            <person name="Collins M."/>
            <person name="Coulsen R."/>
            <person name="Davies R."/>
            <person name="Dyer P.S."/>
            <person name="Farman M.L."/>
            <person name="Fedorova N."/>
            <person name="Fedorova N.D."/>
            <person name="Feldblyum T.V."/>
            <person name="Fischer R."/>
            <person name="Fosker N."/>
            <person name="Fraser A."/>
            <person name="Garcia J.L."/>
            <person name="Garcia M.J."/>
            <person name="Goble A."/>
            <person name="Goldman G.H."/>
            <person name="Gomi K."/>
            <person name="Griffith-Jones S."/>
            <person name="Gwilliam R."/>
            <person name="Haas B.J."/>
            <person name="Haas H."/>
            <person name="Harris D.E."/>
            <person name="Horiuchi H."/>
            <person name="Huang J."/>
            <person name="Humphray S."/>
            <person name="Jimenez J."/>
            <person name="Keller N."/>
            <person name="Khouri H."/>
            <person name="Kitamoto K."/>
            <person name="Kobayashi T."/>
            <person name="Konzack S."/>
            <person name="Kulkarni R."/>
            <person name="Kumagai T."/>
            <person name="Lafton A."/>
            <person name="Latge J.-P."/>
            <person name="Li W."/>
            <person name="Lord A."/>
            <person name="Lu C."/>
            <person name="Majoros W.H."/>
            <person name="May G.S."/>
            <person name="Miller B.L."/>
            <person name="Mohamoud Y."/>
            <person name="Molina M."/>
            <person name="Monod M."/>
            <person name="Mouyna I."/>
            <person name="Mulligan S."/>
            <person name="Murphy L.D."/>
            <person name="O'Neil S."/>
            <person name="Paulsen I."/>
            <person name="Penalva M.A."/>
            <person name="Pertea M."/>
            <person name="Price C."/>
            <person name="Pritchard B.L."/>
            <person name="Quail M.A."/>
            <person name="Rabbinowitsch E."/>
            <person name="Rawlins N."/>
            <person name="Rajandream M.A."/>
            <person name="Reichard U."/>
            <person name="Renauld H."/>
            <person name="Robson G.D."/>
            <person name="Rodriguez de Cordoba S."/>
            <person name="Rodriguez-Pena J.M."/>
            <person name="Ronning C.M."/>
            <person name="Rutter S."/>
            <person name="Salzberg S.L."/>
            <person name="Sanchez M."/>
            <person name="Sanchez-Ferrero J.C."/>
            <person name="Saunders D."/>
            <person name="Seeger K."/>
            <person name="Squares R."/>
            <person name="Squares S."/>
            <person name="Takeuchi M."/>
            <person name="Tekaia F."/>
            <person name="Turner G."/>
            <person name="Vazquez de Aldana C.R."/>
            <person name="Weidman J."/>
            <person name="White O."/>
            <person name="Woodward J.R."/>
            <person name="Yu J.-H."/>
            <person name="Fraser C.M."/>
            <person name="Galagan J.E."/>
            <person name="Asai K."/>
            <person name="Machida M."/>
            <person name="Hall N."/>
            <person name="Barrell B.G."/>
            <person name="Denning D.W."/>
        </authorList>
    </citation>
    <scope>NUCLEOTIDE SEQUENCE [LARGE SCALE GENOMIC DNA]</scope>
    <source>
        <strain>ATCC MYA-4609 / CBS 101355 / FGSC A1100 / Af293</strain>
    </source>
</reference>
<organism>
    <name type="scientific">Aspergillus fumigatus (strain ATCC MYA-4609 / CBS 101355 / FGSC A1100 / Af293)</name>
    <name type="common">Neosartorya fumigata</name>
    <dbReference type="NCBI Taxonomy" id="330879"/>
    <lineage>
        <taxon>Eukaryota</taxon>
        <taxon>Fungi</taxon>
        <taxon>Dikarya</taxon>
        <taxon>Ascomycota</taxon>
        <taxon>Pezizomycotina</taxon>
        <taxon>Eurotiomycetes</taxon>
        <taxon>Eurotiomycetidae</taxon>
        <taxon>Eurotiales</taxon>
        <taxon>Aspergillaceae</taxon>
        <taxon>Aspergillus</taxon>
        <taxon>Aspergillus subgen. Fumigati</taxon>
    </lineage>
</organism>
<protein>
    <recommendedName>
        <fullName evidence="1">Lon protease homolog 2, peroxisomal</fullName>
        <ecNumber evidence="1">3.4.21.53</ecNumber>
    </recommendedName>
</protein>
<evidence type="ECO:0000255" key="1">
    <source>
        <dbReference type="HAMAP-Rule" id="MF_03121"/>
    </source>
</evidence>
<evidence type="ECO:0000255" key="2">
    <source>
        <dbReference type="PROSITE-ProRule" id="PRU01122"/>
    </source>
</evidence>
<evidence type="ECO:0000255" key="3">
    <source>
        <dbReference type="PROSITE-ProRule" id="PRU01123"/>
    </source>
</evidence>
<evidence type="ECO:0000256" key="4">
    <source>
        <dbReference type="SAM" id="MobiDB-lite"/>
    </source>
</evidence>
<accession>Q4WVD9</accession>
<name>LONP2_ASPFU</name>
<keyword id="KW-0067">ATP-binding</keyword>
<keyword id="KW-0378">Hydrolase</keyword>
<keyword id="KW-0547">Nucleotide-binding</keyword>
<keyword id="KW-0576">Peroxisome</keyword>
<keyword id="KW-0645">Protease</keyword>
<keyword id="KW-1185">Reference proteome</keyword>
<keyword id="KW-0720">Serine protease</keyword>